<proteinExistence type="evidence at protein level"/>
<accession>P0DM24</accession>
<accession>A0A384E137</accession>
<dbReference type="PDB" id="6ENA">
    <property type="method" value="NMR"/>
    <property type="chains" value="A=45-75"/>
</dbReference>
<dbReference type="PDBsum" id="6ENA"/>
<dbReference type="SMR" id="P0DM24"/>
<dbReference type="GO" id="GO:0005576">
    <property type="term" value="C:extracellular region"/>
    <property type="evidence" value="ECO:0007669"/>
    <property type="project" value="UniProtKB-SubCell"/>
</dbReference>
<dbReference type="GO" id="GO:0017080">
    <property type="term" value="F:sodium channel regulator activity"/>
    <property type="evidence" value="ECO:0007669"/>
    <property type="project" value="UniProtKB-KW"/>
</dbReference>
<dbReference type="GO" id="GO:0090729">
    <property type="term" value="F:toxin activity"/>
    <property type="evidence" value="ECO:0007669"/>
    <property type="project" value="UniProtKB-KW"/>
</dbReference>
<dbReference type="PROSITE" id="PS60004">
    <property type="entry name" value="OMEGA_CONOTOXIN"/>
    <property type="match status" value="1"/>
</dbReference>
<evidence type="ECO:0000255" key="1"/>
<evidence type="ECO:0000269" key="2">
    <source>
    </source>
</evidence>
<evidence type="ECO:0000269" key="3">
    <source>
    </source>
</evidence>
<evidence type="ECO:0000269" key="4">
    <source>
    </source>
</evidence>
<evidence type="ECO:0000303" key="5">
    <source>
    </source>
</evidence>
<evidence type="ECO:0000305" key="6"/>
<evidence type="ECO:0000305" key="7">
    <source>
    </source>
</evidence>
<evidence type="ECO:0000305" key="8">
    <source>
    </source>
</evidence>
<evidence type="ECO:0000312" key="9">
    <source>
        <dbReference type="PDB" id="6ENA"/>
    </source>
</evidence>
<evidence type="ECO:0007829" key="10">
    <source>
        <dbReference type="PDB" id="6ENA"/>
    </source>
</evidence>
<feature type="signal peptide" evidence="1">
    <location>
        <begin position="1" status="less than"/>
        <end position="28"/>
    </location>
</feature>
<feature type="propeptide" id="PRO_0000445910" evidence="7">
    <location>
        <begin position="29"/>
        <end position="44"/>
    </location>
</feature>
<feature type="chain" id="PRO_0000445911" description="Nemertide alpha-1" evidence="2">
    <location>
        <begin position="45"/>
        <end position="75"/>
    </location>
</feature>
<feature type="site" description="Hydrophobic/aromatic residue important for potent activity" evidence="8">
    <location>
        <position position="52"/>
    </location>
</feature>
<feature type="modified residue" description="4-hydroxyproline" evidence="2">
    <location>
        <position position="72"/>
    </location>
</feature>
<feature type="modified residue" description="4-hydroxyproline" evidence="2">
    <location>
        <position position="73"/>
    </location>
</feature>
<feature type="disulfide bond" evidence="2 9">
    <location>
        <begin position="46"/>
        <end position="60"/>
    </location>
</feature>
<feature type="disulfide bond" evidence="2 9">
    <location>
        <begin position="53"/>
        <end position="64"/>
    </location>
</feature>
<feature type="disulfide bond" evidence="2 9">
    <location>
        <begin position="59"/>
        <end position="70"/>
    </location>
</feature>
<feature type="non-terminal residue">
    <location>
        <position position="1"/>
    </location>
</feature>
<feature type="helix" evidence="10">
    <location>
        <begin position="56"/>
        <end position="58"/>
    </location>
</feature>
<feature type="strand" evidence="10">
    <location>
        <begin position="68"/>
        <end position="70"/>
    </location>
</feature>
<organism>
    <name type="scientific">Lineus longissimus</name>
    <name type="common">Bootlace worm</name>
    <name type="synonym">Ascaris longissima</name>
    <dbReference type="NCBI Taxonomy" id="88925"/>
    <lineage>
        <taxon>Eukaryota</taxon>
        <taxon>Metazoa</taxon>
        <taxon>Spiralia</taxon>
        <taxon>Lophotrochozoa</taxon>
        <taxon>Nemertea</taxon>
        <taxon>Pilidiophora</taxon>
        <taxon>Heteronemertea</taxon>
        <taxon>Lineidae</taxon>
        <taxon>Lineus</taxon>
    </lineage>
</organism>
<name>NEMA1_LINLO</name>
<keyword id="KW-0002">3D-structure</keyword>
<keyword id="KW-0165">Cleavage on pair of basic residues</keyword>
<keyword id="KW-0903">Direct protein sequencing</keyword>
<keyword id="KW-1015">Disulfide bond</keyword>
<keyword id="KW-0379">Hydroxylation</keyword>
<keyword id="KW-0872">Ion channel impairing toxin</keyword>
<keyword id="KW-0960">Knottin</keyword>
<keyword id="KW-0528">Neurotoxin</keyword>
<keyword id="KW-0964">Secreted</keyword>
<keyword id="KW-0732">Signal</keyword>
<keyword id="KW-0800">Toxin</keyword>
<keyword id="KW-0738">Voltage-gated sodium channel impairing toxin</keyword>
<reference evidence="9" key="1">
    <citation type="journal article" date="2018" name="Sci. Rep.">
        <title>Peptide ion channel toxins from the bootlace worm, the longest animal on Earth.</title>
        <authorList>
            <person name="Jacobsson E."/>
            <person name="Andersson H.S."/>
            <person name="Strand M."/>
            <person name="Peigneur S."/>
            <person name="Eriksson C."/>
            <person name="Loden H."/>
            <person name="Shariatgorji M."/>
            <person name="Andren P.E."/>
            <person name="Lebbe E.K.M."/>
            <person name="Rosengren K.J."/>
            <person name="Tytgat J."/>
            <person name="Goeransson U."/>
        </authorList>
    </citation>
    <scope>NUCLEOTIDE SEQUENCE [MRNA]</scope>
    <scope>PROTEIN SEQUENCE OF 45-75</scope>
    <scope>FUNCTION</scope>
    <scope>MASS SPECTROMETRY</scope>
    <scope>HYDROXYLATION AT PRO-72 AND PRO-73</scope>
    <scope>SYNTHESIS OF 45-75</scope>
    <scope>STRUCTURE BY NMR OF 45-75</scope>
    <scope>BIOASSAY</scope>
</reference>
<reference key="2">
    <citation type="journal article" date="2021" name="J. Nat. Prod.">
        <title>Functional characterization of the nemertide alpha family of peptide toxins.</title>
        <authorList>
            <person name="Jacobsson E."/>
            <person name="Peigneur S."/>
            <person name="Andersson H.S."/>
            <person name="Laborde Q."/>
            <person name="Strand M."/>
            <person name="Tytgat J."/>
            <person name="Goeransson U."/>
        </authorList>
    </citation>
    <scope>NUCLEOTIDE SEQUENCE [MRNA]</scope>
    <scope>FUNCTION</scope>
    <scope>SYNTHESIS OF 45-75</scope>
    <scope>BIOASSAY</scope>
</reference>
<reference key="3">
    <citation type="journal article" date="2020" name="Front. Cardiovasc. Med.">
        <title>Compound heterozygous SCN5A mutations in severe sodium channelopathy with Brugada syndrome: a case report.</title>
        <authorList>
            <person name="Nijak A."/>
            <person name="Labro A.J."/>
            <person name="De Wilde H."/>
            <person name="Dewals W."/>
            <person name="Peigneur S."/>
            <person name="Tytgat J."/>
            <person name="Snyders D."/>
            <person name="Sieliwonczyk E."/>
            <person name="Simons E."/>
            <person name="Van Craenenbroeck E."/>
            <person name="Schepers D."/>
            <person name="Van Laer L."/>
            <person name="Saenen J."/>
            <person name="Loeys B."/>
            <person name="Alaerts M."/>
        </authorList>
    </citation>
    <scope>EFFECT IN BRUGADA SYNDROME 1</scope>
    <scope>SYNTHESIS OF 45-75</scope>
</reference>
<sequence>YRIASSSIAKMKTAVFLVGLLFLGLVFADEAAIDSEFDQSIDKRGCIATGSFCTLSKGCCTKNCGWNFKCNPPNQK</sequence>
<protein>
    <recommendedName>
        <fullName evidence="5">Nemertide alpha-1</fullName>
    </recommendedName>
</protein>
<comment type="function">
    <text evidence="2 3 4">Potent toxin, demonstrating strong inhibitory effects on insect sodium channels (Nav) and reduced activity on mammalian sodium channels (PubMed:29567943). Potently inhibits inactivation of insect sodium channels of B.germanica (BgNav1) (EC(50)=8.6 nM), D.melanogaster (Dm Nav1), and arachnid sodium channel V.destructor (VdNav1) (PubMed:29567943, PubMed:34445875). Also delays the inactivation of most mammalian Nav channels tested (human Nav1.1/SCN1A; EC(50)=124.1 nM, rat Nav1.2/SCN2A; EC(50)=359.6 nM, rat Nav1.3/SCN3A; EC(50)=135.4 nM, rat Nav1.4/SCN4A; EC(50)=145.5 nM, human Nav1.5/SCN5A; EC(50)=138.3 nM, mouse Nav1.6/SCN8A; EC(50)=240.4 nM, human Nav1.9/SCN9A; EC(50)=76.5 nM) (PubMed:29567943, PubMed:34445875). Inactivation is completely prevented by a concentration of 1 uM, resulting in sustained, non-inactivating currents (PubMed:29567943). In addition, the toxin significantly enhances the recovery from inactivation, and the open state is not required for the toxin to interact with the channel (PubMed:29567943). In vivo, injection into green crabs (Carcinus maenas at 1 ug/kg) of small doses (1-5 ug/kg) results in slow and fast permanent paralysis, whereas injection of high doses (more than 10 ug/kg) causes death (PubMed:29567943). Injection into juvenile Blaptica dubia cockroaches results in death or permanent paralysis at doses higher than 7.1 ug/kg (PubMed:29567943). Injection into brine shrimp (Artemia salina) stops movement or causes death after 24 hours (EC(50)=0.3 uM) (PubMed:34445875). In the rare inherited cardiac arrhythmia Brugada syndrome 1 (BRGDA1), this toxin is able to restore the loss of function by reducing channel inactivation, without affecting activation, by binding to Nav1.5/SCN5A (PubMed:32850980).</text>
</comment>
<comment type="subcellular location">
    <subcellularLocation>
        <location evidence="7">Secreted</location>
    </subcellularLocation>
</comment>
<comment type="tissue specificity">
    <text evidence="2">Confined to the epidermis and to the mucus layer.</text>
</comment>
<comment type="domain">
    <text evidence="7">The presence of a 'disulfide through disulfide knot' structurally defines this protein as a knottin.</text>
</comment>
<comment type="mass spectrometry"/>
<comment type="miscellaneous">
    <text evidence="2 4">Negative results: does not show effect on both human and rat Nav1.8/SCN10A.</text>
</comment>
<comment type="similarity">
    <text evidence="6">Belongs to the nemertide family.</text>
</comment>